<feature type="chain" id="PRO_0000091955" description="Vitamin B12 import ATP-binding protein BtuD">
    <location>
        <begin position="1"/>
        <end position="253"/>
    </location>
</feature>
<feature type="domain" description="ABC transporter" evidence="1">
    <location>
        <begin position="3"/>
        <end position="237"/>
    </location>
</feature>
<feature type="binding site" evidence="1">
    <location>
        <begin position="31"/>
        <end position="38"/>
    </location>
    <ligand>
        <name>ATP</name>
        <dbReference type="ChEBI" id="CHEBI:30616"/>
    </ligand>
</feature>
<sequence>MILDAKNLAMPPRLLPVSFTIDAGEIVHFIGPNGSGKSTAISMLSGLFEGQGEITFMGQLLSDYDLPSLARMRCYLSQQDRPAFSVAVYHYLALSLSALNNPRVDHVQHALDEICQALNITDKLNRNIQTLSGGEWQRVRLAAACLQVWPAINPEATLLILDEPAAALDIGQEAAMYKLIRRMAEQGIAVVMANHDLNRTLREADKVLLLNNGSCVVKGSPSDVMTVEQLESTFATQVQRIEHEGRSCLIFND</sequence>
<accession>Q6LQ77</accession>
<reference key="1">
    <citation type="journal article" date="2005" name="Science">
        <title>Life at depth: Photobacterium profundum genome sequence and expression analysis.</title>
        <authorList>
            <person name="Vezzi A."/>
            <person name="Campanaro S."/>
            <person name="D'Angelo M."/>
            <person name="Simonato F."/>
            <person name="Vitulo N."/>
            <person name="Lauro F.M."/>
            <person name="Cestaro A."/>
            <person name="Malacrida G."/>
            <person name="Simionati B."/>
            <person name="Cannata N."/>
            <person name="Romualdi C."/>
            <person name="Bartlett D.H."/>
            <person name="Valle G."/>
        </authorList>
    </citation>
    <scope>NUCLEOTIDE SEQUENCE [LARGE SCALE GENOMIC DNA]</scope>
    <source>
        <strain>ATCC BAA-1253 / SS9</strain>
    </source>
</reference>
<protein>
    <recommendedName>
        <fullName evidence="1">Vitamin B12 import ATP-binding protein BtuD</fullName>
        <ecNumber evidence="1">7.6.2.8</ecNumber>
    </recommendedName>
    <alternativeName>
        <fullName evidence="1">Vitamin B12-transporting ATPase</fullName>
    </alternativeName>
</protein>
<evidence type="ECO:0000255" key="1">
    <source>
        <dbReference type="HAMAP-Rule" id="MF_01005"/>
    </source>
</evidence>
<organism>
    <name type="scientific">Photobacterium profundum (strain SS9)</name>
    <dbReference type="NCBI Taxonomy" id="298386"/>
    <lineage>
        <taxon>Bacteria</taxon>
        <taxon>Pseudomonadati</taxon>
        <taxon>Pseudomonadota</taxon>
        <taxon>Gammaproteobacteria</taxon>
        <taxon>Vibrionales</taxon>
        <taxon>Vibrionaceae</taxon>
        <taxon>Photobacterium</taxon>
    </lineage>
</organism>
<gene>
    <name evidence="1" type="primary">btuD</name>
    <name type="ordered locus">PBPRA2151</name>
</gene>
<comment type="function">
    <text evidence="1">Part of the ABC transporter complex BtuCDF involved in vitamin B12 import. Responsible for energy coupling to the transport system.</text>
</comment>
<comment type="catalytic activity">
    <reaction evidence="1">
        <text>an R-cob(III)alamin(out) + ATP + H2O = an R-cob(III)alamin(in) + ADP + phosphate + H(+)</text>
        <dbReference type="Rhea" id="RHEA:17873"/>
        <dbReference type="ChEBI" id="CHEBI:15377"/>
        <dbReference type="ChEBI" id="CHEBI:15378"/>
        <dbReference type="ChEBI" id="CHEBI:30616"/>
        <dbReference type="ChEBI" id="CHEBI:43474"/>
        <dbReference type="ChEBI" id="CHEBI:140785"/>
        <dbReference type="ChEBI" id="CHEBI:456216"/>
        <dbReference type="EC" id="7.6.2.8"/>
    </reaction>
</comment>
<comment type="subunit">
    <text evidence="1">The complex is composed of two ATP-binding proteins (BtuD), two transmembrane proteins (BtuC) and a solute-binding protein (BtuF).</text>
</comment>
<comment type="subcellular location">
    <subcellularLocation>
        <location evidence="1">Cell inner membrane</location>
        <topology evidence="1">Peripheral membrane protein</topology>
    </subcellularLocation>
</comment>
<comment type="similarity">
    <text evidence="1">Belongs to the ABC transporter superfamily. Vitamin B12 importer (TC 3.A.1.13.1) family.</text>
</comment>
<name>BTUD_PHOPR</name>
<proteinExistence type="inferred from homology"/>
<dbReference type="EC" id="7.6.2.8" evidence="1"/>
<dbReference type="EMBL" id="CR378670">
    <property type="protein sequence ID" value="CAG20549.1"/>
    <property type="molecule type" value="Genomic_DNA"/>
</dbReference>
<dbReference type="RefSeq" id="WP_011218841.1">
    <property type="nucleotide sequence ID" value="NC_006370.1"/>
</dbReference>
<dbReference type="SMR" id="Q6LQ77"/>
<dbReference type="STRING" id="298386.PBPRA2151"/>
<dbReference type="KEGG" id="ppr:PBPRA2151"/>
<dbReference type="eggNOG" id="COG4138">
    <property type="taxonomic scope" value="Bacteria"/>
</dbReference>
<dbReference type="HOGENOM" id="CLU_000604_1_11_6"/>
<dbReference type="Proteomes" id="UP000000593">
    <property type="component" value="Chromosome 1"/>
</dbReference>
<dbReference type="GO" id="GO:0005886">
    <property type="term" value="C:plasma membrane"/>
    <property type="evidence" value="ECO:0007669"/>
    <property type="project" value="UniProtKB-SubCell"/>
</dbReference>
<dbReference type="GO" id="GO:0015420">
    <property type="term" value="F:ABC-type vitamin B12 transporter activity"/>
    <property type="evidence" value="ECO:0007669"/>
    <property type="project" value="UniProtKB-UniRule"/>
</dbReference>
<dbReference type="GO" id="GO:0005524">
    <property type="term" value="F:ATP binding"/>
    <property type="evidence" value="ECO:0007669"/>
    <property type="project" value="UniProtKB-KW"/>
</dbReference>
<dbReference type="GO" id="GO:0016887">
    <property type="term" value="F:ATP hydrolysis activity"/>
    <property type="evidence" value="ECO:0007669"/>
    <property type="project" value="InterPro"/>
</dbReference>
<dbReference type="CDD" id="cd03214">
    <property type="entry name" value="ABC_Iron-Siderophores_B12_Hemin"/>
    <property type="match status" value="1"/>
</dbReference>
<dbReference type="FunFam" id="3.40.50.300:FF:000462">
    <property type="entry name" value="Vitamin B12 import ATP-binding protein BtuD"/>
    <property type="match status" value="1"/>
</dbReference>
<dbReference type="Gene3D" id="3.40.50.300">
    <property type="entry name" value="P-loop containing nucleotide triphosphate hydrolases"/>
    <property type="match status" value="1"/>
</dbReference>
<dbReference type="HAMAP" id="MF_01005">
    <property type="entry name" value="BtuD"/>
    <property type="match status" value="1"/>
</dbReference>
<dbReference type="InterPro" id="IPR003593">
    <property type="entry name" value="AAA+_ATPase"/>
</dbReference>
<dbReference type="InterPro" id="IPR003439">
    <property type="entry name" value="ABC_transporter-like_ATP-bd"/>
</dbReference>
<dbReference type="InterPro" id="IPR023693">
    <property type="entry name" value="ABC_transptr_BtuD"/>
</dbReference>
<dbReference type="InterPro" id="IPR050153">
    <property type="entry name" value="Metal_Ion_Import_ABC"/>
</dbReference>
<dbReference type="InterPro" id="IPR027417">
    <property type="entry name" value="P-loop_NTPase"/>
</dbReference>
<dbReference type="NCBIfam" id="NF002981">
    <property type="entry name" value="PRK03695.1"/>
    <property type="match status" value="1"/>
</dbReference>
<dbReference type="PANTHER" id="PTHR42734">
    <property type="entry name" value="METAL TRANSPORT SYSTEM ATP-BINDING PROTEIN TM_0124-RELATED"/>
    <property type="match status" value="1"/>
</dbReference>
<dbReference type="PANTHER" id="PTHR42734:SF18">
    <property type="entry name" value="VITAMIN B12 IMPORT ATP-BINDING PROTEIN BTUD"/>
    <property type="match status" value="1"/>
</dbReference>
<dbReference type="Pfam" id="PF00005">
    <property type="entry name" value="ABC_tran"/>
    <property type="match status" value="1"/>
</dbReference>
<dbReference type="SMART" id="SM00382">
    <property type="entry name" value="AAA"/>
    <property type="match status" value="1"/>
</dbReference>
<dbReference type="SUPFAM" id="SSF52540">
    <property type="entry name" value="P-loop containing nucleoside triphosphate hydrolases"/>
    <property type="match status" value="1"/>
</dbReference>
<dbReference type="PROSITE" id="PS50893">
    <property type="entry name" value="ABC_TRANSPORTER_2"/>
    <property type="match status" value="1"/>
</dbReference>
<keyword id="KW-0067">ATP-binding</keyword>
<keyword id="KW-0997">Cell inner membrane</keyword>
<keyword id="KW-1003">Cell membrane</keyword>
<keyword id="KW-0472">Membrane</keyword>
<keyword id="KW-0547">Nucleotide-binding</keyword>
<keyword id="KW-1185">Reference proteome</keyword>
<keyword id="KW-1278">Translocase</keyword>
<keyword id="KW-0813">Transport</keyword>